<feature type="chain" id="PRO_0000059543" description="Gluconokinase">
    <location>
        <begin position="1"/>
        <end position="513"/>
    </location>
</feature>
<feature type="binding site" evidence="1">
    <location>
        <position position="16"/>
    </location>
    <ligand>
        <name>ATP</name>
        <dbReference type="ChEBI" id="CHEBI:30616"/>
    </ligand>
</feature>
<feature type="binding site" evidence="1">
    <location>
        <position position="261"/>
    </location>
    <ligand>
        <name>ATP</name>
        <dbReference type="ChEBI" id="CHEBI:30616"/>
    </ligand>
</feature>
<feature type="binding site" evidence="1">
    <location>
        <position position="300"/>
    </location>
    <ligand>
        <name>ATP</name>
        <dbReference type="ChEBI" id="CHEBI:30616"/>
    </ligand>
</feature>
<feature type="binding site" evidence="1">
    <location>
        <begin position="412"/>
        <end position="416"/>
    </location>
    <ligand>
        <name>ATP</name>
        <dbReference type="ChEBI" id="CHEBI:30616"/>
    </ligand>
</feature>
<protein>
    <recommendedName>
        <fullName>Gluconokinase</fullName>
        <ecNumber>2.7.1.12</ecNumber>
    </recommendedName>
    <alternativeName>
        <fullName>Gluconate kinase</fullName>
    </alternativeName>
</protein>
<accession>P46834</accession>
<dbReference type="EC" id="2.7.1.12"/>
<dbReference type="EMBL" id="D31631">
    <property type="protein sequence ID" value="BAA06502.1"/>
    <property type="molecule type" value="Genomic_DNA"/>
</dbReference>
<dbReference type="PIR" id="JC2304">
    <property type="entry name" value="JC2304"/>
</dbReference>
<dbReference type="SMR" id="P46834"/>
<dbReference type="UniPathway" id="UPA00792"/>
<dbReference type="GO" id="GO:0005524">
    <property type="term" value="F:ATP binding"/>
    <property type="evidence" value="ECO:0007669"/>
    <property type="project" value="UniProtKB-KW"/>
</dbReference>
<dbReference type="GO" id="GO:0046316">
    <property type="term" value="F:gluconokinase activity"/>
    <property type="evidence" value="ECO:0007669"/>
    <property type="project" value="UniProtKB-EC"/>
</dbReference>
<dbReference type="GO" id="GO:0019521">
    <property type="term" value="P:D-gluconate metabolic process"/>
    <property type="evidence" value="ECO:0007669"/>
    <property type="project" value="UniProtKB-KW"/>
</dbReference>
<dbReference type="CDD" id="cd07770">
    <property type="entry name" value="ASKHA_NBD_FGGY_GntK"/>
    <property type="match status" value="1"/>
</dbReference>
<dbReference type="Gene3D" id="3.30.420.40">
    <property type="match status" value="2"/>
</dbReference>
<dbReference type="InterPro" id="IPR043129">
    <property type="entry name" value="ATPase_NBD"/>
</dbReference>
<dbReference type="InterPro" id="IPR000577">
    <property type="entry name" value="Carb_kinase_FGGY"/>
</dbReference>
<dbReference type="InterPro" id="IPR018483">
    <property type="entry name" value="Carb_kinase_FGGY_CS"/>
</dbReference>
<dbReference type="InterPro" id="IPR018485">
    <property type="entry name" value="FGGY_C"/>
</dbReference>
<dbReference type="InterPro" id="IPR050406">
    <property type="entry name" value="FGGY_Carb_Kinase"/>
</dbReference>
<dbReference type="InterPro" id="IPR018484">
    <property type="entry name" value="FGGY_N"/>
</dbReference>
<dbReference type="InterPro" id="IPR006002">
    <property type="entry name" value="Gluconate_kinase"/>
</dbReference>
<dbReference type="NCBIfam" id="TIGR01314">
    <property type="entry name" value="gntK_FGGY"/>
    <property type="match status" value="1"/>
</dbReference>
<dbReference type="PANTHER" id="PTHR43095:SF2">
    <property type="entry name" value="GLUCONOKINASE"/>
    <property type="match status" value="1"/>
</dbReference>
<dbReference type="PANTHER" id="PTHR43095">
    <property type="entry name" value="SUGAR KINASE"/>
    <property type="match status" value="1"/>
</dbReference>
<dbReference type="Pfam" id="PF02782">
    <property type="entry name" value="FGGY_C"/>
    <property type="match status" value="1"/>
</dbReference>
<dbReference type="Pfam" id="PF00370">
    <property type="entry name" value="FGGY_N"/>
    <property type="match status" value="1"/>
</dbReference>
<dbReference type="PIRSF" id="PIRSF000538">
    <property type="entry name" value="GlpK"/>
    <property type="match status" value="1"/>
</dbReference>
<dbReference type="SUPFAM" id="SSF53067">
    <property type="entry name" value="Actin-like ATPase domain"/>
    <property type="match status" value="2"/>
</dbReference>
<dbReference type="PROSITE" id="PS00933">
    <property type="entry name" value="FGGY_KINASES_1"/>
    <property type="match status" value="1"/>
</dbReference>
<dbReference type="PROSITE" id="PS00445">
    <property type="entry name" value="FGGY_KINASES_2"/>
    <property type="match status" value="1"/>
</dbReference>
<evidence type="ECO:0000250" key="1"/>
<evidence type="ECO:0000305" key="2"/>
<proteinExistence type="inferred from homology"/>
<comment type="catalytic activity">
    <reaction>
        <text>D-gluconate + ATP = 6-phospho-D-gluconate + ADP + H(+)</text>
        <dbReference type="Rhea" id="RHEA:19433"/>
        <dbReference type="ChEBI" id="CHEBI:15378"/>
        <dbReference type="ChEBI" id="CHEBI:18391"/>
        <dbReference type="ChEBI" id="CHEBI:30616"/>
        <dbReference type="ChEBI" id="CHEBI:58759"/>
        <dbReference type="ChEBI" id="CHEBI:456216"/>
        <dbReference type="EC" id="2.7.1.12"/>
    </reaction>
</comment>
<comment type="activity regulation">
    <text>Catabolite repression by gluconate.</text>
</comment>
<comment type="pathway">
    <text>Carbohydrate acid metabolism; D-gluconate degradation.</text>
</comment>
<comment type="similarity">
    <text evidence="2">Belongs to the FGGY kinase family.</text>
</comment>
<keyword id="KW-0067">ATP-binding</keyword>
<keyword id="KW-0311">Gluconate utilization</keyword>
<keyword id="KW-0418">Kinase</keyword>
<keyword id="KW-0547">Nucleotide-binding</keyword>
<keyword id="KW-0808">Transferase</keyword>
<organism>
    <name type="scientific">Bacillus licheniformis</name>
    <dbReference type="NCBI Taxonomy" id="1402"/>
    <lineage>
        <taxon>Bacteria</taxon>
        <taxon>Bacillati</taxon>
        <taxon>Bacillota</taxon>
        <taxon>Bacilli</taxon>
        <taxon>Bacillales</taxon>
        <taxon>Bacillaceae</taxon>
        <taxon>Bacillus</taxon>
    </lineage>
</organism>
<gene>
    <name type="primary">gntK</name>
</gene>
<sequence>MTSYMLGIDIGTTSTKAVLFSEKGDVIQKESIGYALYTPDISTAEQNPDEIFQAVIQSTAKIMQQHPDKQPSFISFSSAMHSVIAMDENDKPLTSCITWADNRSEGWAHKIKEEMNGHNVYKRTGTPIHPMAPLSKITWIVNEHPEIAVKAKKYIGIKEYIFKKLFDQYVVDYSLASAMGMMNLKTLAWDEEALAIAGITPDHLSKLVPTTAIFHHCNPELAAMMGIDPQTPFVIGASDGVLSNLGVNAIKKGEIAVTIGTSGAIRPIIDKPQTDEKGRIFCYALTENHWVIGGPVNNGGIVLRWIRDEFASSEIETAKRLGIDPYDVLTKIAERVRPGADGLLFHPYLAGERAPLWNPDVPGSFFGLTMSHKKEHMIRAALEGVIYNLYTVFLALTECMDGPVARIQATGGFARSDVWRQMMADIFESEVVVPESYESSCLGACILGLYATGKIDSFDVVSDMIGSTHRHAPKEESAKEYRKLMPLFINLSRALENEYTQIANYQRSLSSKK</sequence>
<reference key="1">
    <citation type="journal article" date="1994" name="DNA Res.">
        <title>Nucleotide sequence and features of the Bacillus licheniformis gnt operon.</title>
        <authorList>
            <person name="Yoshida K."/>
            <person name="Seki S."/>
            <person name="Fujita Y."/>
        </authorList>
    </citation>
    <scope>NUCLEOTIDE SEQUENCE [GENOMIC DNA]</scope>
    <source>
        <strain>BGSC5A2</strain>
    </source>
</reference>
<name>GNTK_BACLI</name>